<comment type="function">
    <text>Cytochromes P450 are a group of heme-thiolate monooxygenases. In liver microsomes, this enzyme is involved in an NADPH-dependent electron transport pathway. It oxidizes a variety of structurally unrelated compounds, including steroids, fatty acids, and xenobiotics.</text>
</comment>
<comment type="catalytic activity">
    <reaction>
        <text>an organic molecule + reduced [NADPH--hemoprotein reductase] + O2 = an alcohol + oxidized [NADPH--hemoprotein reductase] + H2O + H(+)</text>
        <dbReference type="Rhea" id="RHEA:17149"/>
        <dbReference type="Rhea" id="RHEA-COMP:11964"/>
        <dbReference type="Rhea" id="RHEA-COMP:11965"/>
        <dbReference type="ChEBI" id="CHEBI:15377"/>
        <dbReference type="ChEBI" id="CHEBI:15378"/>
        <dbReference type="ChEBI" id="CHEBI:15379"/>
        <dbReference type="ChEBI" id="CHEBI:30879"/>
        <dbReference type="ChEBI" id="CHEBI:57618"/>
        <dbReference type="ChEBI" id="CHEBI:58210"/>
        <dbReference type="ChEBI" id="CHEBI:142491"/>
        <dbReference type="EC" id="1.14.14.1"/>
    </reaction>
</comment>
<comment type="cofactor">
    <cofactor evidence="1">
        <name>heme</name>
        <dbReference type="ChEBI" id="CHEBI:30413"/>
    </cofactor>
</comment>
<comment type="subcellular location">
    <subcellularLocation>
        <location>Endoplasmic reticulum membrane</location>
        <topology>Peripheral membrane protein</topology>
    </subcellularLocation>
    <subcellularLocation>
        <location>Microsome membrane</location>
        <topology>Peripheral membrane protein</topology>
    </subcellularLocation>
</comment>
<comment type="induction">
    <text>P450 can be induced to high levels in liver and other tissues by various foreign compounds, including drugs, pesticides, and carcinogens.</text>
</comment>
<comment type="similarity">
    <text evidence="2">Belongs to the cytochrome P450 family.</text>
</comment>
<protein>
    <recommendedName>
        <fullName>Cytochrome P450 3A27</fullName>
        <ecNumber>1.14.14.1</ecNumber>
    </recommendedName>
    <alternativeName>
        <fullName>CYPIIIA27</fullName>
    </alternativeName>
</protein>
<evidence type="ECO:0000250" key="1"/>
<evidence type="ECO:0000305" key="2"/>
<dbReference type="EC" id="1.14.14.1"/>
<dbReference type="EMBL" id="U96077">
    <property type="protein sequence ID" value="AAB82422.1"/>
    <property type="molecule type" value="mRNA"/>
</dbReference>
<dbReference type="SMR" id="O42563"/>
<dbReference type="Ensembl" id="ENSOMYT00000138544.1">
    <property type="protein sequence ID" value="ENSOMYP00000129915.1"/>
    <property type="gene ID" value="ENSOMYG00000061833.1"/>
</dbReference>
<dbReference type="GeneTree" id="ENSGT00950000182958"/>
<dbReference type="OrthoDB" id="1470350at2759"/>
<dbReference type="Proteomes" id="UP000694395">
    <property type="component" value="Chromosome 17"/>
</dbReference>
<dbReference type="GO" id="GO:0005737">
    <property type="term" value="C:cytoplasm"/>
    <property type="evidence" value="ECO:0000314"/>
    <property type="project" value="AgBase"/>
</dbReference>
<dbReference type="GO" id="GO:0005789">
    <property type="term" value="C:endoplasmic reticulum membrane"/>
    <property type="evidence" value="ECO:0007669"/>
    <property type="project" value="UniProtKB-SubCell"/>
</dbReference>
<dbReference type="GO" id="GO:0016020">
    <property type="term" value="C:membrane"/>
    <property type="evidence" value="ECO:0000314"/>
    <property type="project" value="AgBase"/>
</dbReference>
<dbReference type="GO" id="GO:0020037">
    <property type="term" value="F:heme binding"/>
    <property type="evidence" value="ECO:0007669"/>
    <property type="project" value="InterPro"/>
</dbReference>
<dbReference type="GO" id="GO:0005506">
    <property type="term" value="F:iron ion binding"/>
    <property type="evidence" value="ECO:0007669"/>
    <property type="project" value="InterPro"/>
</dbReference>
<dbReference type="GO" id="GO:0016712">
    <property type="term" value="F:oxidoreductase activity, acting on paired donors, with incorporation or reduction of molecular oxygen, reduced flavin or flavoprotein as one donor, and incorporation of one atom of oxygen"/>
    <property type="evidence" value="ECO:0007669"/>
    <property type="project" value="UniProtKB-EC"/>
</dbReference>
<dbReference type="GO" id="GO:0050649">
    <property type="term" value="F:testosterone 6-beta-hydroxylase activity"/>
    <property type="evidence" value="ECO:0000314"/>
    <property type="project" value="AgBase"/>
</dbReference>
<dbReference type="GO" id="GO:0042448">
    <property type="term" value="P:progesterone metabolic process"/>
    <property type="evidence" value="ECO:0000314"/>
    <property type="project" value="AgBase"/>
</dbReference>
<dbReference type="FunFam" id="1.10.630.10:FF:000003">
    <property type="entry name" value="cytochrome P450 3A12-like isoform X2"/>
    <property type="match status" value="1"/>
</dbReference>
<dbReference type="Gene3D" id="1.10.630.10">
    <property type="entry name" value="Cytochrome P450"/>
    <property type="match status" value="1"/>
</dbReference>
<dbReference type="InterPro" id="IPR001128">
    <property type="entry name" value="Cyt_P450"/>
</dbReference>
<dbReference type="InterPro" id="IPR017972">
    <property type="entry name" value="Cyt_P450_CS"/>
</dbReference>
<dbReference type="InterPro" id="IPR008072">
    <property type="entry name" value="Cyt_P450_E_CYP3A"/>
</dbReference>
<dbReference type="InterPro" id="IPR002402">
    <property type="entry name" value="Cyt_P450_E_grp-II"/>
</dbReference>
<dbReference type="InterPro" id="IPR036396">
    <property type="entry name" value="Cyt_P450_sf"/>
</dbReference>
<dbReference type="InterPro" id="IPR050705">
    <property type="entry name" value="Cytochrome_P450_3A"/>
</dbReference>
<dbReference type="PANTHER" id="PTHR24302">
    <property type="entry name" value="CYTOCHROME P450 FAMILY 3"/>
    <property type="match status" value="1"/>
</dbReference>
<dbReference type="PANTHER" id="PTHR24302:SF32">
    <property type="entry name" value="CYTOCHROME P450, FAMILY 3, SUBFAMILY A, POLYPEPTIDE 65"/>
    <property type="match status" value="1"/>
</dbReference>
<dbReference type="Pfam" id="PF00067">
    <property type="entry name" value="p450"/>
    <property type="match status" value="1"/>
</dbReference>
<dbReference type="PRINTS" id="PR00464">
    <property type="entry name" value="EP450II"/>
</dbReference>
<dbReference type="PRINTS" id="PR01689">
    <property type="entry name" value="EP450IICYP3A"/>
</dbReference>
<dbReference type="PRINTS" id="PR00385">
    <property type="entry name" value="P450"/>
</dbReference>
<dbReference type="SUPFAM" id="SSF48264">
    <property type="entry name" value="Cytochrome P450"/>
    <property type="match status" value="1"/>
</dbReference>
<dbReference type="PROSITE" id="PS00086">
    <property type="entry name" value="CYTOCHROME_P450"/>
    <property type="match status" value="1"/>
</dbReference>
<keyword id="KW-0256">Endoplasmic reticulum</keyword>
<keyword id="KW-0349">Heme</keyword>
<keyword id="KW-0408">Iron</keyword>
<keyword id="KW-0472">Membrane</keyword>
<keyword id="KW-0479">Metal-binding</keyword>
<keyword id="KW-0492">Microsome</keyword>
<keyword id="KW-0503">Monooxygenase</keyword>
<keyword id="KW-0560">Oxidoreductase</keyword>
<feature type="chain" id="PRO_0000051806" description="Cytochrome P450 3A27">
    <location>
        <begin position="1"/>
        <end position="518"/>
    </location>
</feature>
<feature type="binding site" description="axial binding residue" evidence="1">
    <location>
        <position position="447"/>
    </location>
    <ligand>
        <name>heme</name>
        <dbReference type="ChEBI" id="CHEBI:30413"/>
    </ligand>
    <ligandPart>
        <name>Fe</name>
        <dbReference type="ChEBI" id="CHEBI:18248"/>
    </ligandPart>
</feature>
<proteinExistence type="evidence at transcript level"/>
<sequence length="518" mass="59211">MMSFLPYFSAETWTLLALLITLIVVYGYWPYGVFTKMGIPGPKPLPYFGTMLEYKKGFTNFDTECFQKYGRIWGIYDGRQPVLCIMDKSMIKTVLIKECYNIFTNRRNFHLNGELFDALSVAEDDTWRRIRSVLSPSFTSGRLKEMFGIMKQHSSTLLSGMKKQADKDQTIEVKEFFGPYSMDVVTSTAFSVDIDSLNNPSDPFVSNVKKMLKFDLFNPLFLLVALFPFTGPILEKMKFSFFPTAVTDFFYASLAKIKSGRDTGNSTNRVDFLQLMIDSQKGSDTKTGEEQTKGLTDHEILSQAMIFIFAGYETSSSTMSFLAYNLATNHHVMTKLQEEIDTVFPNKAPIQYEALMQMDYLDCVLNESLRLYPIAPRLERVAKKTVEINGIVIPKDCIVLVPTWTLHRDPEIWSDPEEFKPERFSKENKESIDPYTYMPFGAGPRNCIGMRFALIMIKLAMVEILQSFTFSVCDETEIPLEMDNQGLLMPKRPIKLRLEARRNTPSNTTATTLKSPTT</sequence>
<reference key="1">
    <citation type="journal article" date="1998" name="Arch. Biochem. Biophys.">
        <title>Cloning, sequencing, and tissue expression of CYP3A27, a new member of the CYP3A subfamily from embryonic and adult rainbow trout livers.</title>
        <authorList>
            <person name="Lee S.-J."/>
            <person name="Wang-Buhler J.-L."/>
            <person name="Cok I."/>
            <person name="Yu T.S."/>
            <person name="Yang Y.H."/>
            <person name="Miranda C.L."/>
            <person name="Lech J."/>
            <person name="Buhler D.R."/>
        </authorList>
    </citation>
    <scope>NUCLEOTIDE SEQUENCE [MRNA]</scope>
    <source>
        <strain>Shasta</strain>
        <tissue>Liver</tissue>
    </source>
</reference>
<gene>
    <name type="primary">cyp3a27</name>
</gene>
<organism>
    <name type="scientific">Oncorhynchus mykiss</name>
    <name type="common">Rainbow trout</name>
    <name type="synonym">Salmo gairdneri</name>
    <dbReference type="NCBI Taxonomy" id="8022"/>
    <lineage>
        <taxon>Eukaryota</taxon>
        <taxon>Metazoa</taxon>
        <taxon>Chordata</taxon>
        <taxon>Craniata</taxon>
        <taxon>Vertebrata</taxon>
        <taxon>Euteleostomi</taxon>
        <taxon>Actinopterygii</taxon>
        <taxon>Neopterygii</taxon>
        <taxon>Teleostei</taxon>
        <taxon>Protacanthopterygii</taxon>
        <taxon>Salmoniformes</taxon>
        <taxon>Salmonidae</taxon>
        <taxon>Salmoninae</taxon>
        <taxon>Oncorhynchus</taxon>
    </lineage>
</organism>
<accession>O42563</accession>
<name>CP3AR_ONCMY</name>